<keyword id="KW-0002">3D-structure</keyword>
<keyword id="KW-0031">Aminopeptidase</keyword>
<keyword id="KW-0903">Direct protein sequencing</keyword>
<keyword id="KW-0378">Hydrolase</keyword>
<keyword id="KW-0645">Protease</keyword>
<keyword id="KW-0964">Secreted</keyword>
<keyword id="KW-0720">Serine protease</keyword>
<keyword id="KW-0732">Signal</keyword>
<feature type="signal peptide" evidence="3">
    <location>
        <begin position="1"/>
        <end position="21"/>
    </location>
</feature>
<feature type="chain" id="PRO_5003379706" description="Asp/Glu-specific dipeptidyl-peptidase">
    <location>
        <begin position="22"/>
        <end position="717"/>
    </location>
</feature>
<feature type="active site" description="Charge relay system" evidence="2">
    <location>
        <position position="85"/>
    </location>
</feature>
<feature type="active site" description="Charge relay system" evidence="2">
    <location>
        <position position="226"/>
    </location>
</feature>
<feature type="active site" description="Charge relay system" evidence="2 6">
    <location>
        <position position="652"/>
    </location>
</feature>
<feature type="site" description="Is essential for the Asp/Glu P1 specificity of DPP11; involved in the recognition of the Asp/Glu residue at the P1 position of substrate peptides" evidence="1 6">
    <location>
        <position position="670"/>
    </location>
</feature>
<feature type="mutagenesis site" description="Loss of catalytic activity." evidence="3">
    <original>S</original>
    <variation>A</variation>
    <location>
        <position position="652"/>
    </location>
</feature>
<feature type="mutagenesis site" description="Loss of catalytic activity." evidence="3">
    <original>R</original>
    <variation>D</variation>
    <location>
        <position position="670"/>
    </location>
</feature>
<feature type="helix" evidence="8">
    <location>
        <begin position="28"/>
        <end position="30"/>
    </location>
</feature>
<feature type="helix" evidence="8">
    <location>
        <begin position="31"/>
        <end position="40"/>
    </location>
</feature>
<feature type="helix" evidence="8">
    <location>
        <begin position="47"/>
        <end position="50"/>
    </location>
</feature>
<feature type="helix" evidence="8">
    <location>
        <begin position="58"/>
        <end position="61"/>
    </location>
</feature>
<feature type="strand" evidence="8">
    <location>
        <begin position="62"/>
        <end position="65"/>
    </location>
</feature>
<feature type="turn" evidence="8">
    <location>
        <begin position="66"/>
        <end position="68"/>
    </location>
</feature>
<feature type="strand" evidence="8">
    <location>
        <begin position="69"/>
        <end position="73"/>
    </location>
</feature>
<feature type="strand" evidence="8">
    <location>
        <begin position="79"/>
        <end position="82"/>
    </location>
</feature>
<feature type="helix" evidence="8">
    <location>
        <begin position="84"/>
        <end position="94"/>
    </location>
</feature>
<feature type="strand" evidence="8">
    <location>
        <begin position="97"/>
        <end position="99"/>
    </location>
</feature>
<feature type="helix" evidence="8">
    <location>
        <begin position="101"/>
        <end position="104"/>
    </location>
</feature>
<feature type="helix" evidence="8">
    <location>
        <begin position="111"/>
        <end position="113"/>
    </location>
</feature>
<feature type="strand" evidence="8">
    <location>
        <begin position="122"/>
        <end position="130"/>
    </location>
</feature>
<feature type="helix" evidence="8">
    <location>
        <begin position="132"/>
        <end position="140"/>
    </location>
</feature>
<feature type="helix" evidence="8">
    <location>
        <begin position="149"/>
        <end position="151"/>
    </location>
</feature>
<feature type="helix" evidence="8">
    <location>
        <begin position="153"/>
        <end position="157"/>
    </location>
</feature>
<feature type="helix" evidence="8">
    <location>
        <begin position="160"/>
        <end position="164"/>
    </location>
</feature>
<feature type="helix" evidence="8">
    <location>
        <begin position="166"/>
        <end position="169"/>
    </location>
</feature>
<feature type="strand" evidence="8">
    <location>
        <begin position="174"/>
        <end position="181"/>
    </location>
</feature>
<feature type="turn" evidence="8">
    <location>
        <begin position="182"/>
        <end position="185"/>
    </location>
</feature>
<feature type="strand" evidence="8">
    <location>
        <begin position="186"/>
        <end position="196"/>
    </location>
</feature>
<feature type="strand" evidence="8">
    <location>
        <begin position="198"/>
        <end position="203"/>
    </location>
</feature>
<feature type="helix" evidence="8">
    <location>
        <begin position="206"/>
        <end position="209"/>
    </location>
</feature>
<feature type="turn" evidence="8">
    <location>
        <begin position="210"/>
        <end position="218"/>
    </location>
</feature>
<feature type="strand" evidence="8">
    <location>
        <begin position="228"/>
        <end position="234"/>
    </location>
</feature>
<feature type="strand" evidence="8">
    <location>
        <begin position="268"/>
        <end position="273"/>
    </location>
</feature>
<feature type="helix" evidence="8">
    <location>
        <begin position="284"/>
        <end position="292"/>
    </location>
</feature>
<feature type="helix" evidence="8">
    <location>
        <begin position="294"/>
        <end position="314"/>
    </location>
</feature>
<feature type="helix" evidence="8">
    <location>
        <begin position="317"/>
        <end position="346"/>
    </location>
</feature>
<feature type="helix" evidence="8">
    <location>
        <begin position="349"/>
        <end position="366"/>
    </location>
</feature>
<feature type="helix" evidence="8">
    <location>
        <begin position="371"/>
        <end position="385"/>
    </location>
</feature>
<feature type="helix" evidence="8">
    <location>
        <begin position="387"/>
        <end position="399"/>
    </location>
</feature>
<feature type="turn" evidence="8">
    <location>
        <begin position="400"/>
        <end position="403"/>
    </location>
</feature>
<feature type="helix" evidence="8">
    <location>
        <begin position="405"/>
        <end position="408"/>
    </location>
</feature>
<feature type="turn" evidence="8">
    <location>
        <begin position="416"/>
        <end position="418"/>
    </location>
</feature>
<feature type="strand" evidence="9">
    <location>
        <begin position="420"/>
        <end position="422"/>
    </location>
</feature>
<feature type="helix" evidence="8">
    <location>
        <begin position="423"/>
        <end position="440"/>
    </location>
</feature>
<feature type="helix" evidence="8">
    <location>
        <begin position="447"/>
        <end position="452"/>
    </location>
</feature>
<feature type="helix" evidence="8">
    <location>
        <begin position="454"/>
        <end position="465"/>
    </location>
</feature>
<feature type="helix" evidence="8">
    <location>
        <begin position="468"/>
        <end position="470"/>
    </location>
</feature>
<feature type="helix" evidence="8">
    <location>
        <begin position="473"/>
        <end position="481"/>
    </location>
</feature>
<feature type="strand" evidence="8">
    <location>
        <begin position="482"/>
        <end position="484"/>
    </location>
</feature>
<feature type="helix" evidence="8">
    <location>
        <begin position="485"/>
        <end position="495"/>
    </location>
</feature>
<feature type="helix" evidence="8">
    <location>
        <begin position="497"/>
        <end position="499"/>
    </location>
</feature>
<feature type="helix" evidence="8">
    <location>
        <begin position="501"/>
        <end position="508"/>
    </location>
</feature>
<feature type="helix" evidence="8">
    <location>
        <begin position="513"/>
        <end position="516"/>
    </location>
</feature>
<feature type="helix" evidence="8">
    <location>
        <begin position="520"/>
        <end position="561"/>
    </location>
</feature>
<feature type="helix" evidence="8">
    <location>
        <begin position="563"/>
        <end position="565"/>
    </location>
</feature>
<feature type="strand" evidence="9">
    <location>
        <begin position="571"/>
        <end position="573"/>
    </location>
</feature>
<feature type="strand" evidence="8">
    <location>
        <begin position="575"/>
        <end position="581"/>
    </location>
</feature>
<feature type="strand" evidence="8">
    <location>
        <begin position="584"/>
        <end position="587"/>
    </location>
</feature>
<feature type="strand" evidence="8">
    <location>
        <begin position="590"/>
        <end position="592"/>
    </location>
</feature>
<feature type="strand" evidence="8">
    <location>
        <begin position="594"/>
        <end position="597"/>
    </location>
</feature>
<feature type="helix" evidence="8">
    <location>
        <begin position="598"/>
        <end position="604"/>
    </location>
</feature>
<feature type="strand" evidence="9">
    <location>
        <begin position="607"/>
        <end position="609"/>
    </location>
</feature>
<feature type="helix" evidence="8">
    <location>
        <begin position="610"/>
        <end position="612"/>
    </location>
</feature>
<feature type="helix" evidence="8">
    <location>
        <begin position="616"/>
        <end position="624"/>
    </location>
</feature>
<feature type="helix" evidence="8">
    <location>
        <begin position="628"/>
        <end position="630"/>
    </location>
</feature>
<feature type="strand" evidence="8">
    <location>
        <begin position="638"/>
        <end position="644"/>
    </location>
</feature>
<feature type="strand" evidence="8">
    <location>
        <begin position="655"/>
        <end position="657"/>
    </location>
</feature>
<feature type="strand" evidence="8">
    <location>
        <begin position="663"/>
        <end position="670"/>
    </location>
</feature>
<feature type="helix" evidence="8">
    <location>
        <begin position="672"/>
        <end position="678"/>
    </location>
</feature>
<feature type="turn" evidence="8">
    <location>
        <begin position="683"/>
        <end position="685"/>
    </location>
</feature>
<feature type="strand" evidence="8">
    <location>
        <begin position="688"/>
        <end position="692"/>
    </location>
</feature>
<feature type="helix" evidence="8">
    <location>
        <begin position="693"/>
        <end position="701"/>
    </location>
</feature>
<feature type="turn" evidence="8">
    <location>
        <begin position="702"/>
        <end position="704"/>
    </location>
</feature>
<feature type="helix" evidence="8">
    <location>
        <begin position="707"/>
        <end position="713"/>
    </location>
</feature>
<evidence type="ECO:0000250" key="1">
    <source>
        <dbReference type="UniProtKB" id="B2RID1"/>
    </source>
</evidence>
<evidence type="ECO:0000250" key="2">
    <source>
        <dbReference type="UniProtKB" id="V5YM14"/>
    </source>
</evidence>
<evidence type="ECO:0000269" key="3">
    <source>
    </source>
</evidence>
<evidence type="ECO:0000303" key="4">
    <source>
    </source>
</evidence>
<evidence type="ECO:0000305" key="5"/>
<evidence type="ECO:0000305" key="6">
    <source>
    </source>
</evidence>
<evidence type="ECO:0000312" key="7">
    <source>
        <dbReference type="EMBL" id="BAK57291.1"/>
    </source>
</evidence>
<evidence type="ECO:0007829" key="8">
    <source>
        <dbReference type="PDB" id="5JWI"/>
    </source>
</evidence>
<evidence type="ECO:0007829" key="9">
    <source>
        <dbReference type="PDB" id="5JXP"/>
    </source>
</evidence>
<comment type="function">
    <text evidence="3">Catalyzes the removal of dipeptides from the N-terminus of oligopeptides. Shows a strict specificity for acidic residues (Asp or Glu) in the P1 position, and has a hydrophobic residue preference at the P2 position. Is likely involved in amino acid metabolism and bacterial growth/survival of asaccharolytic P.endodontalis, that utilizes amino acids from extracellular proteinaceous nutrients as energy and carbon sources.</text>
</comment>
<comment type="activity regulation">
    <text evidence="3">Enzyme activity is completely blocked by diisopropyl-fluorophosphates, moderately by phenylmethylsulfonyl fluoride (PMSF) and 4-(2-methyl)benzenesulfonyl fluoride, and slightly by pepstatin in vitro.</text>
</comment>
<comment type="biophysicochemical properties">
    <phDependence>
        <text evidence="3">Optimum pH is 7.0.</text>
    </phDependence>
</comment>
<comment type="subcellular location">
    <subcellularLocation>
        <location evidence="3">Secreted</location>
    </subcellularLocation>
    <subcellularLocation>
        <location evidence="3">Cell surface</location>
    </subcellularLocation>
    <text evidence="3">Is observed in both cell-associated and soluble extracellular forms.</text>
</comment>
<comment type="similarity">
    <text evidence="5">Belongs to the peptidase S46 family.</text>
</comment>
<accession>F8WQK8</accession>
<protein>
    <recommendedName>
        <fullName evidence="4">Asp/Glu-specific dipeptidyl-peptidase</fullName>
        <ecNumber evidence="3">3.4.14.-</ecNumber>
    </recommendedName>
    <alternativeName>
        <fullName evidence="4">Dipeptidyl-peptidase 11</fullName>
        <shortName evidence="4">DPP11</shortName>
    </alternativeName>
</protein>
<proteinExistence type="evidence at protein level"/>
<name>DPP11_POREA</name>
<organism>
    <name type="scientific">Porphyromonas endodontalis (strain ATCC 35406 / DSM 24491 / JCM 8526 / CCUG 16442 / BCRC 14492 / NCTC 13058 / HG 370)</name>
    <name type="common">Bacteroides endodontalis</name>
    <dbReference type="NCBI Taxonomy" id="553175"/>
    <lineage>
        <taxon>Bacteria</taxon>
        <taxon>Pseudomonadati</taxon>
        <taxon>Bacteroidota</taxon>
        <taxon>Bacteroidia</taxon>
        <taxon>Bacteroidales</taxon>
        <taxon>Porphyromonadaceae</taxon>
        <taxon>Porphyromonas</taxon>
    </lineage>
</organism>
<gene>
    <name type="primary">dpp11</name>
    <name evidence="7" type="synonym">PeDPP11</name>
</gene>
<sequence>MNKRFFPTLLLAFVCSTLAYADGGMWLMQQINGQVARMKSLGMQLEAADIYNPNGSSLKDAVVMFDGGCTGVLVSNQGLLLTNHHCGYDQIQKHSSVQHNYLKDGFWSYSLAEELVNPGLEVEIVDEITDVTAAVKKELERIKKPSGLEFLSPRYLSSLAPEIVGKKAASRPGYRYEIKAFYGGNRYYMFTKKVFRDVRLVAAPPSSIGKFGSDTDNWAWPRHTGDFSIFRLYADKNGNPAEYSKDNVPYRPKRWVKVNAQGVKEGDFALIMGYPGTTYKFFTADEVTEWSEIDNNIRIEMRGILQDVMLREMLADPKINIMYAAKYASSQNGYKRAQGANWAIRRRSLREIKLAQQQEVLAWAKQKGIATTEEAVRAISKAIEGRQDLRMRQRYLLEGILMGIEMSNAPAADSDIADHWDDPARREAGLQSIRKQFEAFFNKDYSPEVEKDQLAIALLTRYAERIPAEKQPISIREGIAEYGSAKAYVEMIFDKSIYASRERFEEFMKNPDRDRLLRDPMSRFAASVAYEHQKLAKEVAAFDAPLAAAQRSYVASVLDMKGQPNLAPDANLTLRFTYGEIKGYQPRDVVTYGAKSTLEGVMEKEDPNNWEYVVDPKLKALYEAKNYGRYANSDGSMPVNFCATTHTTGGNSGSPVMNARGELIGLNFDRNWEGVGGDIEYLPNYQRSIILDIRYLLFIIDKFAGCQRLIDEIQPQF</sequence>
<dbReference type="EC" id="3.4.14.-" evidence="3"/>
<dbReference type="EMBL" id="AB610284">
    <property type="protein sequence ID" value="BAK57291.1"/>
    <property type="molecule type" value="Genomic_DNA"/>
</dbReference>
<dbReference type="PDB" id="5JWG">
    <property type="method" value="X-ray"/>
    <property type="resolution" value="2.20 A"/>
    <property type="chains" value="A/B=22-717"/>
</dbReference>
<dbReference type="PDB" id="5JWI">
    <property type="method" value="X-ray"/>
    <property type="resolution" value="2.10 A"/>
    <property type="chains" value="A/B=22-717"/>
</dbReference>
<dbReference type="PDB" id="5JXK">
    <property type="method" value="X-ray"/>
    <property type="resolution" value="2.85 A"/>
    <property type="chains" value="A/B=22-717"/>
</dbReference>
<dbReference type="PDB" id="5JXP">
    <property type="method" value="X-ray"/>
    <property type="resolution" value="2.50 A"/>
    <property type="chains" value="A=22-717"/>
</dbReference>
<dbReference type="PDB" id="5JY0">
    <property type="method" value="X-ray"/>
    <property type="resolution" value="2.60 A"/>
    <property type="chains" value="A=22-717"/>
</dbReference>
<dbReference type="PDBsum" id="5JWG"/>
<dbReference type="PDBsum" id="5JWI"/>
<dbReference type="PDBsum" id="5JXK"/>
<dbReference type="PDBsum" id="5JXP"/>
<dbReference type="PDBsum" id="5JY0"/>
<dbReference type="SMR" id="F8WQK8"/>
<dbReference type="STRING" id="553175.POREN0001_1130"/>
<dbReference type="MEROPS" id="S46.002"/>
<dbReference type="eggNOG" id="COG3591">
    <property type="taxonomic scope" value="Bacteria"/>
</dbReference>
<dbReference type="GO" id="GO:0009986">
    <property type="term" value="C:cell surface"/>
    <property type="evidence" value="ECO:0000314"/>
    <property type="project" value="UniProtKB"/>
</dbReference>
<dbReference type="GO" id="GO:0005576">
    <property type="term" value="C:extracellular region"/>
    <property type="evidence" value="ECO:0000314"/>
    <property type="project" value="UniProtKB"/>
</dbReference>
<dbReference type="GO" id="GO:0008239">
    <property type="term" value="F:dipeptidyl-peptidase activity"/>
    <property type="evidence" value="ECO:0000314"/>
    <property type="project" value="UniProtKB"/>
</dbReference>
<dbReference type="GO" id="GO:0070009">
    <property type="term" value="F:serine-type aminopeptidase activity"/>
    <property type="evidence" value="ECO:0007669"/>
    <property type="project" value="InterPro"/>
</dbReference>
<dbReference type="GO" id="GO:0043171">
    <property type="term" value="P:peptide catabolic process"/>
    <property type="evidence" value="ECO:0000314"/>
    <property type="project" value="UniProtKB"/>
</dbReference>
<dbReference type="GO" id="GO:0006508">
    <property type="term" value="P:proteolysis"/>
    <property type="evidence" value="ECO:0007669"/>
    <property type="project" value="UniProtKB-KW"/>
</dbReference>
<dbReference type="Gene3D" id="2.40.10.10">
    <property type="entry name" value="Trypsin-like serine proteases"/>
    <property type="match status" value="1"/>
</dbReference>
<dbReference type="InterPro" id="IPR019500">
    <property type="entry name" value="Pep_S46"/>
</dbReference>
<dbReference type="InterPro" id="IPR009003">
    <property type="entry name" value="Peptidase_S1_PA"/>
</dbReference>
<dbReference type="InterPro" id="IPR043504">
    <property type="entry name" value="Peptidase_S1_PA_chymotrypsin"/>
</dbReference>
<dbReference type="PANTHER" id="PTHR38469">
    <property type="entry name" value="PERIPLASMIC PEPTIDASE SUBFAMILY S1B"/>
    <property type="match status" value="1"/>
</dbReference>
<dbReference type="PANTHER" id="PTHR38469:SF1">
    <property type="entry name" value="PERIPLASMIC PEPTIDASE SUBFAMILY S1B"/>
    <property type="match status" value="1"/>
</dbReference>
<dbReference type="Pfam" id="PF10459">
    <property type="entry name" value="Peptidase_S46"/>
    <property type="match status" value="1"/>
</dbReference>
<dbReference type="SUPFAM" id="SSF50494">
    <property type="entry name" value="Trypsin-like serine proteases"/>
    <property type="match status" value="1"/>
</dbReference>
<reference key="1">
    <citation type="journal article" date="2011" name="J. Biol. Chem.">
        <title>Asp- and Glu-specific novel dipeptidyl peptidase 11 of Porphyromonas gingivalis ensures utilization of proteinaceous energy sources.</title>
        <authorList>
            <person name="Ohara-Nemoto Y."/>
            <person name="Shimoyama Y."/>
            <person name="Kimura S."/>
            <person name="Kon A."/>
            <person name="Haraga H."/>
            <person name="Ono T."/>
            <person name="Nemoto T.K."/>
        </authorList>
    </citation>
    <scope>NUCLEOTIDE SEQUENCE [GENOMIC DNA]</scope>
    <scope>PROTEIN SEQUENCE OF 22-30</scope>
    <scope>FUNCTION</scope>
    <scope>CATALYTIC ACTIVITY</scope>
    <scope>SUBSTRATE SPECIFICITY</scope>
    <scope>BIOPHYSICOCHEMICAL PROPERTIES</scope>
    <scope>ACTIVITY REGULATION</scope>
    <scope>SUBCELLULAR LOCATION</scope>
    <scope>MUTAGENESIS OF SER-652 AND ARG-670</scope>
    <source>
        <strain>ATCC 35406 / DSM 24491 / JCM 8526 / CCUG 16442 / BCRC 14492 / NCTC 13058 / HG 370</strain>
    </source>
</reference>